<organism>
    <name type="scientific">Dickeya zeae (strain Ech586)</name>
    <name type="common">Dickeya dadantii (strain Ech586)</name>
    <dbReference type="NCBI Taxonomy" id="590409"/>
    <lineage>
        <taxon>Bacteria</taxon>
        <taxon>Pseudomonadati</taxon>
        <taxon>Pseudomonadota</taxon>
        <taxon>Gammaproteobacteria</taxon>
        <taxon>Enterobacterales</taxon>
        <taxon>Pectobacteriaceae</taxon>
        <taxon>Dickeya</taxon>
        <taxon>Dickeya parazeae</taxon>
    </lineage>
</organism>
<protein>
    <recommendedName>
        <fullName evidence="1">Probable Sec-independent protein translocase protein TatE</fullName>
    </recommendedName>
</protein>
<evidence type="ECO:0000255" key="1">
    <source>
        <dbReference type="HAMAP-Rule" id="MF_00903"/>
    </source>
</evidence>
<evidence type="ECO:0000256" key="2">
    <source>
        <dbReference type="SAM" id="MobiDB-lite"/>
    </source>
</evidence>
<feature type="chain" id="PRO_0000412960" description="Probable Sec-independent protein translocase protein TatE">
    <location>
        <begin position="1"/>
        <end position="69"/>
    </location>
</feature>
<feature type="transmembrane region" description="Helical" evidence="1">
    <location>
        <begin position="1"/>
        <end position="21"/>
    </location>
</feature>
<feature type="region of interest" description="Disordered" evidence="2">
    <location>
        <begin position="45"/>
        <end position="69"/>
    </location>
</feature>
<feature type="compositionally biased region" description="Basic and acidic residues" evidence="2">
    <location>
        <begin position="54"/>
        <end position="69"/>
    </location>
</feature>
<gene>
    <name evidence="1" type="primary">tatE</name>
    <name type="ordered locus">Dd586_1130</name>
</gene>
<name>TATE_DICZ5</name>
<dbReference type="EMBL" id="CP001836">
    <property type="protein sequence ID" value="ACZ76014.1"/>
    <property type="molecule type" value="Genomic_DNA"/>
</dbReference>
<dbReference type="RefSeq" id="WP_012770646.1">
    <property type="nucleotide sequence ID" value="NC_013592.1"/>
</dbReference>
<dbReference type="SMR" id="D2BUT3"/>
<dbReference type="STRING" id="590409.Dd586_1130"/>
<dbReference type="GeneID" id="60867461"/>
<dbReference type="KEGG" id="ddc:Dd586_1130"/>
<dbReference type="eggNOG" id="COG1826">
    <property type="taxonomic scope" value="Bacteria"/>
</dbReference>
<dbReference type="HOGENOM" id="CLU_086034_5_3_6"/>
<dbReference type="OrthoDB" id="7066617at2"/>
<dbReference type="Proteomes" id="UP000001446">
    <property type="component" value="Chromosome"/>
</dbReference>
<dbReference type="GO" id="GO:0033281">
    <property type="term" value="C:TAT protein transport complex"/>
    <property type="evidence" value="ECO:0007669"/>
    <property type="project" value="UniProtKB-UniRule"/>
</dbReference>
<dbReference type="GO" id="GO:0008320">
    <property type="term" value="F:protein transmembrane transporter activity"/>
    <property type="evidence" value="ECO:0007669"/>
    <property type="project" value="UniProtKB-UniRule"/>
</dbReference>
<dbReference type="GO" id="GO:0043953">
    <property type="term" value="P:protein transport by the Tat complex"/>
    <property type="evidence" value="ECO:0007669"/>
    <property type="project" value="UniProtKB-UniRule"/>
</dbReference>
<dbReference type="Gene3D" id="1.20.5.3310">
    <property type="match status" value="1"/>
</dbReference>
<dbReference type="HAMAP" id="MF_00236">
    <property type="entry name" value="TatA_E"/>
    <property type="match status" value="1"/>
</dbReference>
<dbReference type="HAMAP" id="MF_00903">
    <property type="entry name" value="TatE"/>
    <property type="match status" value="1"/>
</dbReference>
<dbReference type="InterPro" id="IPR003369">
    <property type="entry name" value="TatA/B/E"/>
</dbReference>
<dbReference type="InterPro" id="IPR006312">
    <property type="entry name" value="TatA/E"/>
</dbReference>
<dbReference type="InterPro" id="IPR024905">
    <property type="entry name" value="TatE"/>
</dbReference>
<dbReference type="NCBIfam" id="NF002448">
    <property type="entry name" value="PRK01614.1"/>
    <property type="match status" value="1"/>
</dbReference>
<dbReference type="NCBIfam" id="NF002960">
    <property type="entry name" value="PRK03625.1"/>
    <property type="match status" value="1"/>
</dbReference>
<dbReference type="NCBIfam" id="TIGR01411">
    <property type="entry name" value="tatAE"/>
    <property type="match status" value="1"/>
</dbReference>
<dbReference type="PANTHER" id="PTHR42982">
    <property type="entry name" value="SEC-INDEPENDENT PROTEIN TRANSLOCASE PROTEIN TATA"/>
    <property type="match status" value="1"/>
</dbReference>
<dbReference type="PANTHER" id="PTHR42982:SF5">
    <property type="entry name" value="SEC-INDEPENDENT PROTEIN TRANSLOCASE PROTEIN TATE"/>
    <property type="match status" value="1"/>
</dbReference>
<dbReference type="Pfam" id="PF02416">
    <property type="entry name" value="TatA_B_E"/>
    <property type="match status" value="1"/>
</dbReference>
<comment type="function">
    <text evidence="1">Part of the twin-arginine translocation (Tat) system that transports large folded proteins containing a characteristic twin-arginine motif in their signal peptide across membranes. TatE shares overlapping functions with TatA.</text>
</comment>
<comment type="subcellular location">
    <subcellularLocation>
        <location evidence="1">Cell inner membrane</location>
        <topology evidence="1">Single-pass membrane protein</topology>
    </subcellularLocation>
</comment>
<comment type="similarity">
    <text evidence="1">Belongs to the TatA/E family. TatE subfamily.</text>
</comment>
<accession>D2BUT3</accession>
<sequence length="69" mass="7204">MEGISIAKLLVIGALIVLLFGTNKLRSLGGDLGAAIKGFKKAMNDDQPAAKSSAQDEHPAAISETRPKE</sequence>
<proteinExistence type="inferred from homology"/>
<keyword id="KW-0997">Cell inner membrane</keyword>
<keyword id="KW-1003">Cell membrane</keyword>
<keyword id="KW-0472">Membrane</keyword>
<keyword id="KW-0653">Protein transport</keyword>
<keyword id="KW-0811">Translocation</keyword>
<keyword id="KW-0812">Transmembrane</keyword>
<keyword id="KW-1133">Transmembrane helix</keyword>
<keyword id="KW-0813">Transport</keyword>
<reference key="1">
    <citation type="submission" date="2009-12" db="EMBL/GenBank/DDBJ databases">
        <title>Complete sequence of Dickeya dadantii Ech586.</title>
        <authorList>
            <consortium name="US DOE Joint Genome Institute"/>
            <person name="Lucas S."/>
            <person name="Copeland A."/>
            <person name="Lapidus A."/>
            <person name="Glavina del Rio T."/>
            <person name="Tice H."/>
            <person name="Bruce D."/>
            <person name="Goodwin L."/>
            <person name="Pitluck S."/>
            <person name="Munk A.C."/>
            <person name="Brettin T."/>
            <person name="Detter J.C."/>
            <person name="Han C."/>
            <person name="Tapia R."/>
            <person name="Larimer F."/>
            <person name="Land M."/>
            <person name="Hauser L."/>
            <person name="Kyrpides N."/>
            <person name="Mikhailova N."/>
            <person name="Balakrishnan V."/>
            <person name="Glasner J."/>
            <person name="Perna N.T."/>
        </authorList>
    </citation>
    <scope>NUCLEOTIDE SEQUENCE [LARGE SCALE GENOMIC DNA]</scope>
    <source>
        <strain>Ech586</strain>
    </source>
</reference>